<feature type="chain" id="PRO_1000142217" description="Large ribosomal subunit protein uL22">
    <location>
        <begin position="1"/>
        <end position="111"/>
    </location>
</feature>
<sequence>MKSSAVLKGLQMSPQKARLVADLVRGQPVGKALEILRFTTKKAALPIRKCLESAIANAENNEGADVDALVVEQIMIDGGAVLKRFAARAKGRGSRILKRTSHITVVVAEVY</sequence>
<evidence type="ECO:0000255" key="1">
    <source>
        <dbReference type="HAMAP-Rule" id="MF_01331"/>
    </source>
</evidence>
<evidence type="ECO:0000305" key="2"/>
<dbReference type="EMBL" id="CP001219">
    <property type="protein sequence ID" value="ACK77893.1"/>
    <property type="molecule type" value="Genomic_DNA"/>
</dbReference>
<dbReference type="RefSeq" id="WP_009565436.1">
    <property type="nucleotide sequence ID" value="NC_011761.1"/>
</dbReference>
<dbReference type="SMR" id="B7J472"/>
<dbReference type="STRING" id="243159.AFE_0332"/>
<dbReference type="PaxDb" id="243159-AFE_0332"/>
<dbReference type="GeneID" id="65279711"/>
<dbReference type="KEGG" id="afr:AFE_0332"/>
<dbReference type="eggNOG" id="COG0091">
    <property type="taxonomic scope" value="Bacteria"/>
</dbReference>
<dbReference type="HOGENOM" id="CLU_083987_3_3_6"/>
<dbReference type="Proteomes" id="UP000001362">
    <property type="component" value="Chromosome"/>
</dbReference>
<dbReference type="GO" id="GO:0022625">
    <property type="term" value="C:cytosolic large ribosomal subunit"/>
    <property type="evidence" value="ECO:0007669"/>
    <property type="project" value="TreeGrafter"/>
</dbReference>
<dbReference type="GO" id="GO:0019843">
    <property type="term" value="F:rRNA binding"/>
    <property type="evidence" value="ECO:0007669"/>
    <property type="project" value="UniProtKB-UniRule"/>
</dbReference>
<dbReference type="GO" id="GO:0003735">
    <property type="term" value="F:structural constituent of ribosome"/>
    <property type="evidence" value="ECO:0007669"/>
    <property type="project" value="InterPro"/>
</dbReference>
<dbReference type="GO" id="GO:0006412">
    <property type="term" value="P:translation"/>
    <property type="evidence" value="ECO:0007669"/>
    <property type="project" value="UniProtKB-UniRule"/>
</dbReference>
<dbReference type="CDD" id="cd00336">
    <property type="entry name" value="Ribosomal_L22"/>
    <property type="match status" value="1"/>
</dbReference>
<dbReference type="Gene3D" id="3.90.470.10">
    <property type="entry name" value="Ribosomal protein L22/L17"/>
    <property type="match status" value="1"/>
</dbReference>
<dbReference type="HAMAP" id="MF_01331_B">
    <property type="entry name" value="Ribosomal_uL22_B"/>
    <property type="match status" value="1"/>
</dbReference>
<dbReference type="InterPro" id="IPR001063">
    <property type="entry name" value="Ribosomal_uL22"/>
</dbReference>
<dbReference type="InterPro" id="IPR005727">
    <property type="entry name" value="Ribosomal_uL22_bac/chlpt-type"/>
</dbReference>
<dbReference type="InterPro" id="IPR047867">
    <property type="entry name" value="Ribosomal_uL22_bac/org-type"/>
</dbReference>
<dbReference type="InterPro" id="IPR018260">
    <property type="entry name" value="Ribosomal_uL22_CS"/>
</dbReference>
<dbReference type="InterPro" id="IPR036394">
    <property type="entry name" value="Ribosomal_uL22_sf"/>
</dbReference>
<dbReference type="NCBIfam" id="TIGR01044">
    <property type="entry name" value="rplV_bact"/>
    <property type="match status" value="1"/>
</dbReference>
<dbReference type="PANTHER" id="PTHR13501">
    <property type="entry name" value="CHLOROPLAST 50S RIBOSOMAL PROTEIN L22-RELATED"/>
    <property type="match status" value="1"/>
</dbReference>
<dbReference type="PANTHER" id="PTHR13501:SF8">
    <property type="entry name" value="LARGE RIBOSOMAL SUBUNIT PROTEIN UL22M"/>
    <property type="match status" value="1"/>
</dbReference>
<dbReference type="Pfam" id="PF00237">
    <property type="entry name" value="Ribosomal_L22"/>
    <property type="match status" value="1"/>
</dbReference>
<dbReference type="SUPFAM" id="SSF54843">
    <property type="entry name" value="Ribosomal protein L22"/>
    <property type="match status" value="1"/>
</dbReference>
<dbReference type="PROSITE" id="PS00464">
    <property type="entry name" value="RIBOSOMAL_L22"/>
    <property type="match status" value="1"/>
</dbReference>
<protein>
    <recommendedName>
        <fullName evidence="1">Large ribosomal subunit protein uL22</fullName>
    </recommendedName>
    <alternativeName>
        <fullName evidence="2">50S ribosomal protein L22</fullName>
    </alternativeName>
</protein>
<organism>
    <name type="scientific">Acidithiobacillus ferrooxidans (strain ATCC 23270 / DSM 14882 / CIP 104768 / NCIMB 8455)</name>
    <name type="common">Ferrobacillus ferrooxidans (strain ATCC 23270)</name>
    <dbReference type="NCBI Taxonomy" id="243159"/>
    <lineage>
        <taxon>Bacteria</taxon>
        <taxon>Pseudomonadati</taxon>
        <taxon>Pseudomonadota</taxon>
        <taxon>Acidithiobacillia</taxon>
        <taxon>Acidithiobacillales</taxon>
        <taxon>Acidithiobacillaceae</taxon>
        <taxon>Acidithiobacillus</taxon>
    </lineage>
</organism>
<reference key="1">
    <citation type="journal article" date="2008" name="BMC Genomics">
        <title>Acidithiobacillus ferrooxidans metabolism: from genome sequence to industrial applications.</title>
        <authorList>
            <person name="Valdes J."/>
            <person name="Pedroso I."/>
            <person name="Quatrini R."/>
            <person name="Dodson R.J."/>
            <person name="Tettelin H."/>
            <person name="Blake R. II"/>
            <person name="Eisen J.A."/>
            <person name="Holmes D.S."/>
        </authorList>
    </citation>
    <scope>NUCLEOTIDE SEQUENCE [LARGE SCALE GENOMIC DNA]</scope>
    <source>
        <strain>ATCC 23270 / DSM 14882 / CIP 104768 / NCIMB 8455</strain>
    </source>
</reference>
<gene>
    <name evidence="1" type="primary">rplV</name>
    <name type="ordered locus">AFE_0332</name>
</gene>
<proteinExistence type="inferred from homology"/>
<comment type="function">
    <text evidence="1">This protein binds specifically to 23S rRNA; its binding is stimulated by other ribosomal proteins, e.g. L4, L17, and L20. It is important during the early stages of 50S assembly. It makes multiple contacts with different domains of the 23S rRNA in the assembled 50S subunit and ribosome (By similarity).</text>
</comment>
<comment type="function">
    <text evidence="1">The globular domain of the protein is located near the polypeptide exit tunnel on the outside of the subunit, while an extended beta-hairpin is found that lines the wall of the exit tunnel in the center of the 70S ribosome.</text>
</comment>
<comment type="subunit">
    <text evidence="1">Part of the 50S ribosomal subunit.</text>
</comment>
<comment type="similarity">
    <text evidence="1">Belongs to the universal ribosomal protein uL22 family.</text>
</comment>
<name>RL22_ACIF2</name>
<accession>B7J472</accession>
<keyword id="KW-1185">Reference proteome</keyword>
<keyword id="KW-0687">Ribonucleoprotein</keyword>
<keyword id="KW-0689">Ribosomal protein</keyword>
<keyword id="KW-0694">RNA-binding</keyword>
<keyword id="KW-0699">rRNA-binding</keyword>